<proteinExistence type="inferred from homology"/>
<accession>B1I953</accession>
<protein>
    <recommendedName>
        <fullName evidence="1">Ribosomal RNA small subunit methyltransferase H</fullName>
        <ecNumber evidence="1">2.1.1.199</ecNumber>
    </recommendedName>
    <alternativeName>
        <fullName evidence="1">16S rRNA m(4)C1402 methyltransferase</fullName>
    </alternativeName>
    <alternativeName>
        <fullName evidence="1">rRNA (cytosine-N(4)-)-methyltransferase RsmH</fullName>
    </alternativeName>
</protein>
<organism>
    <name type="scientific">Streptococcus pneumoniae (strain Hungary19A-6)</name>
    <dbReference type="NCBI Taxonomy" id="487214"/>
    <lineage>
        <taxon>Bacteria</taxon>
        <taxon>Bacillati</taxon>
        <taxon>Bacillota</taxon>
        <taxon>Bacilli</taxon>
        <taxon>Lactobacillales</taxon>
        <taxon>Streptococcaceae</taxon>
        <taxon>Streptococcus</taxon>
    </lineage>
</organism>
<name>RSMH_STRPI</name>
<keyword id="KW-0963">Cytoplasm</keyword>
<keyword id="KW-0489">Methyltransferase</keyword>
<keyword id="KW-0698">rRNA processing</keyword>
<keyword id="KW-0949">S-adenosyl-L-methionine</keyword>
<keyword id="KW-0808">Transferase</keyword>
<dbReference type="EC" id="2.1.1.199" evidence="1"/>
<dbReference type="EMBL" id="CP000936">
    <property type="protein sequence ID" value="ACA35591.1"/>
    <property type="molecule type" value="Genomic_DNA"/>
</dbReference>
<dbReference type="RefSeq" id="WP_000159404.1">
    <property type="nucleotide sequence ID" value="NC_010380.1"/>
</dbReference>
<dbReference type="SMR" id="B1I953"/>
<dbReference type="KEGG" id="spv:SPH_0444"/>
<dbReference type="HOGENOM" id="CLU_038422_2_0_9"/>
<dbReference type="Proteomes" id="UP000002163">
    <property type="component" value="Chromosome"/>
</dbReference>
<dbReference type="GO" id="GO:0005737">
    <property type="term" value="C:cytoplasm"/>
    <property type="evidence" value="ECO:0007669"/>
    <property type="project" value="UniProtKB-SubCell"/>
</dbReference>
<dbReference type="GO" id="GO:0071424">
    <property type="term" value="F:rRNA (cytosine-N4-)-methyltransferase activity"/>
    <property type="evidence" value="ECO:0007669"/>
    <property type="project" value="UniProtKB-UniRule"/>
</dbReference>
<dbReference type="GO" id="GO:0070475">
    <property type="term" value="P:rRNA base methylation"/>
    <property type="evidence" value="ECO:0007669"/>
    <property type="project" value="UniProtKB-UniRule"/>
</dbReference>
<dbReference type="FunFam" id="1.10.150.170:FF:000001">
    <property type="entry name" value="Ribosomal RNA small subunit methyltransferase H"/>
    <property type="match status" value="1"/>
</dbReference>
<dbReference type="Gene3D" id="1.10.150.170">
    <property type="entry name" value="Putative methyltransferase TM0872, insert domain"/>
    <property type="match status" value="1"/>
</dbReference>
<dbReference type="Gene3D" id="3.40.50.150">
    <property type="entry name" value="Vaccinia Virus protein VP39"/>
    <property type="match status" value="1"/>
</dbReference>
<dbReference type="HAMAP" id="MF_01007">
    <property type="entry name" value="16SrRNA_methyltr_H"/>
    <property type="match status" value="1"/>
</dbReference>
<dbReference type="InterPro" id="IPR002903">
    <property type="entry name" value="RsmH"/>
</dbReference>
<dbReference type="InterPro" id="IPR023397">
    <property type="entry name" value="SAM-dep_MeTrfase_MraW_recog"/>
</dbReference>
<dbReference type="InterPro" id="IPR029063">
    <property type="entry name" value="SAM-dependent_MTases_sf"/>
</dbReference>
<dbReference type="NCBIfam" id="TIGR00006">
    <property type="entry name" value="16S rRNA (cytosine(1402)-N(4))-methyltransferase RsmH"/>
    <property type="match status" value="1"/>
</dbReference>
<dbReference type="PANTHER" id="PTHR11265:SF0">
    <property type="entry name" value="12S RRNA N4-METHYLCYTIDINE METHYLTRANSFERASE"/>
    <property type="match status" value="1"/>
</dbReference>
<dbReference type="PANTHER" id="PTHR11265">
    <property type="entry name" value="S-ADENOSYL-METHYLTRANSFERASE MRAW"/>
    <property type="match status" value="1"/>
</dbReference>
<dbReference type="Pfam" id="PF01795">
    <property type="entry name" value="Methyltransf_5"/>
    <property type="match status" value="1"/>
</dbReference>
<dbReference type="PIRSF" id="PIRSF004486">
    <property type="entry name" value="MraW"/>
    <property type="match status" value="1"/>
</dbReference>
<dbReference type="SUPFAM" id="SSF81799">
    <property type="entry name" value="Putative methyltransferase TM0872, insert domain"/>
    <property type="match status" value="1"/>
</dbReference>
<dbReference type="SUPFAM" id="SSF53335">
    <property type="entry name" value="S-adenosyl-L-methionine-dependent methyltransferases"/>
    <property type="match status" value="1"/>
</dbReference>
<gene>
    <name evidence="1" type="primary">rsmH</name>
    <name type="synonym">mraW</name>
    <name type="ordered locus">SPH_0444</name>
</gene>
<comment type="function">
    <text evidence="1">Specifically methylates the N4 position of cytidine in position 1402 (C1402) of 16S rRNA.</text>
</comment>
<comment type="catalytic activity">
    <reaction evidence="1">
        <text>cytidine(1402) in 16S rRNA + S-adenosyl-L-methionine = N(4)-methylcytidine(1402) in 16S rRNA + S-adenosyl-L-homocysteine + H(+)</text>
        <dbReference type="Rhea" id="RHEA:42928"/>
        <dbReference type="Rhea" id="RHEA-COMP:10286"/>
        <dbReference type="Rhea" id="RHEA-COMP:10287"/>
        <dbReference type="ChEBI" id="CHEBI:15378"/>
        <dbReference type="ChEBI" id="CHEBI:57856"/>
        <dbReference type="ChEBI" id="CHEBI:59789"/>
        <dbReference type="ChEBI" id="CHEBI:74506"/>
        <dbReference type="ChEBI" id="CHEBI:82748"/>
        <dbReference type="EC" id="2.1.1.199"/>
    </reaction>
</comment>
<comment type="subcellular location">
    <subcellularLocation>
        <location evidence="1">Cytoplasm</location>
    </subcellularLocation>
</comment>
<comment type="similarity">
    <text evidence="1">Belongs to the methyltransferase superfamily. RsmH family.</text>
</comment>
<sequence>MTKEFHHVTVLLHETIDMLDVKPDGIYVDATLGGAGHSEYLLSKLSEKGHLYAFDQDQNAIDNAQKRLAPYIEKGMVTFIKDNFRHLQARLREAGVQEIDGICYDLGVSSPQLDQRERGFSYKKDAPLDMRMNQDASLTAYEVVNHYDYHDLVRIFFKYGEDKFSKQIARKIEQEREVKPIETTTELAEIIKSAKPAKELKKKGHPAKQIFQSIRIEVNDELGAADESIQQAMDMLALDGRISVITFHSLEDRLTKQLFKEASTVEVPKGLPFIPDDLKPKMELVSRKPILPSAEELEANNRSHSAKLRVARKIHK</sequence>
<reference key="1">
    <citation type="journal article" date="2010" name="Genome Biol.">
        <title>Structure and dynamics of the pan-genome of Streptococcus pneumoniae and closely related species.</title>
        <authorList>
            <person name="Donati C."/>
            <person name="Hiller N.L."/>
            <person name="Tettelin H."/>
            <person name="Muzzi A."/>
            <person name="Croucher N.J."/>
            <person name="Angiuoli S.V."/>
            <person name="Oggioni M."/>
            <person name="Dunning Hotopp J.C."/>
            <person name="Hu F.Z."/>
            <person name="Riley D.R."/>
            <person name="Covacci A."/>
            <person name="Mitchell T.J."/>
            <person name="Bentley S.D."/>
            <person name="Kilian M."/>
            <person name="Ehrlich G.D."/>
            <person name="Rappuoli R."/>
            <person name="Moxon E.R."/>
            <person name="Masignani V."/>
        </authorList>
    </citation>
    <scope>NUCLEOTIDE SEQUENCE [LARGE SCALE GENOMIC DNA]</scope>
    <source>
        <strain>Hungary19A-6</strain>
    </source>
</reference>
<feature type="chain" id="PRO_0000387152" description="Ribosomal RNA small subunit methyltransferase H">
    <location>
        <begin position="1"/>
        <end position="316"/>
    </location>
</feature>
<feature type="binding site" evidence="1">
    <location>
        <begin position="35"/>
        <end position="37"/>
    </location>
    <ligand>
        <name>S-adenosyl-L-methionine</name>
        <dbReference type="ChEBI" id="CHEBI:59789"/>
    </ligand>
</feature>
<feature type="binding site" evidence="1">
    <location>
        <position position="55"/>
    </location>
    <ligand>
        <name>S-adenosyl-L-methionine</name>
        <dbReference type="ChEBI" id="CHEBI:59789"/>
    </ligand>
</feature>
<feature type="binding site" evidence="1">
    <location>
        <position position="84"/>
    </location>
    <ligand>
        <name>S-adenosyl-L-methionine</name>
        <dbReference type="ChEBI" id="CHEBI:59789"/>
    </ligand>
</feature>
<feature type="binding site" evidence="1">
    <location>
        <position position="105"/>
    </location>
    <ligand>
        <name>S-adenosyl-L-methionine</name>
        <dbReference type="ChEBI" id="CHEBI:59789"/>
    </ligand>
</feature>
<feature type="binding site" evidence="1">
    <location>
        <position position="112"/>
    </location>
    <ligand>
        <name>S-adenosyl-L-methionine</name>
        <dbReference type="ChEBI" id="CHEBI:59789"/>
    </ligand>
</feature>
<evidence type="ECO:0000255" key="1">
    <source>
        <dbReference type="HAMAP-Rule" id="MF_01007"/>
    </source>
</evidence>